<organism>
    <name type="scientific">Salmonella arizonae (strain ATCC BAA-731 / CDC346-86 / RSK2980)</name>
    <dbReference type="NCBI Taxonomy" id="41514"/>
    <lineage>
        <taxon>Bacteria</taxon>
        <taxon>Pseudomonadati</taxon>
        <taxon>Pseudomonadota</taxon>
        <taxon>Gammaproteobacteria</taxon>
        <taxon>Enterobacterales</taxon>
        <taxon>Enterobacteriaceae</taxon>
        <taxon>Salmonella</taxon>
    </lineage>
</organism>
<proteinExistence type="inferred from homology"/>
<gene>
    <name evidence="1" type="primary">darP</name>
    <name type="ordered locus">SARI_03210</name>
</gene>
<reference key="1">
    <citation type="submission" date="2007-11" db="EMBL/GenBank/DDBJ databases">
        <authorList>
            <consortium name="The Salmonella enterica serovar Arizonae Genome Sequencing Project"/>
            <person name="McClelland M."/>
            <person name="Sanderson E.K."/>
            <person name="Porwollik S."/>
            <person name="Spieth J."/>
            <person name="Clifton W.S."/>
            <person name="Fulton R."/>
            <person name="Chunyan W."/>
            <person name="Wollam A."/>
            <person name="Shah N."/>
            <person name="Pepin K."/>
            <person name="Bhonagiri V."/>
            <person name="Nash W."/>
            <person name="Johnson M."/>
            <person name="Thiruvilangam P."/>
            <person name="Wilson R."/>
        </authorList>
    </citation>
    <scope>NUCLEOTIDE SEQUENCE [LARGE SCALE GENOMIC DNA]</scope>
    <source>
        <strain>ATCC BAA-731 / CDC346-86 / RSK2980</strain>
    </source>
</reference>
<comment type="function">
    <text evidence="1">Member of a network of 50S ribosomal subunit biogenesis factors which assembles along the 30S-50S interface, preventing incorrect 23S rRNA structures from forming. Promotes peptidyl transferase center (PTC) maturation.</text>
</comment>
<comment type="subcellular location">
    <subcellularLocation>
        <location evidence="1">Cytoplasm</location>
    </subcellularLocation>
    <text evidence="1">Associates with late stage pre-50S ribosomal subunits.</text>
</comment>
<comment type="similarity">
    <text evidence="1">Belongs to the DarP family.</text>
</comment>
<keyword id="KW-0963">Cytoplasm</keyword>
<keyword id="KW-1185">Reference proteome</keyword>
<keyword id="KW-0690">Ribosome biogenesis</keyword>
<keyword id="KW-0694">RNA-binding</keyword>
<keyword id="KW-0699">rRNA-binding</keyword>
<evidence type="ECO:0000255" key="1">
    <source>
        <dbReference type="HAMAP-Rule" id="MF_00765"/>
    </source>
</evidence>
<sequence>MTKQPEDWLDDVPGDDIEDEDDEIIWVSKSEIKRDAEELKRLGAELVDLGRNALDKIPLDADLRDAIELAQRIKMEGRRRQLQLIGKMLRQRDVDPIRQALDKLKNRHNQQVVLFHKLEHLRDRLIVEGDDAVAEILNLWPNADRQQLRSLIRNAKKEKEGNKPPKSARQIFQYLRELAENEG</sequence>
<dbReference type="EMBL" id="CP000880">
    <property type="protein sequence ID" value="ABX23046.1"/>
    <property type="molecule type" value="Genomic_DNA"/>
</dbReference>
<dbReference type="SMR" id="A9MEY0"/>
<dbReference type="STRING" id="41514.SARI_03210"/>
<dbReference type="KEGG" id="ses:SARI_03210"/>
<dbReference type="HOGENOM" id="CLU_106757_2_0_6"/>
<dbReference type="Proteomes" id="UP000002084">
    <property type="component" value="Chromosome"/>
</dbReference>
<dbReference type="GO" id="GO:0005829">
    <property type="term" value="C:cytosol"/>
    <property type="evidence" value="ECO:0007669"/>
    <property type="project" value="TreeGrafter"/>
</dbReference>
<dbReference type="GO" id="GO:0043022">
    <property type="term" value="F:ribosome binding"/>
    <property type="evidence" value="ECO:0007669"/>
    <property type="project" value="UniProtKB-UniRule"/>
</dbReference>
<dbReference type="GO" id="GO:0019843">
    <property type="term" value="F:rRNA binding"/>
    <property type="evidence" value="ECO:0007669"/>
    <property type="project" value="UniProtKB-UniRule"/>
</dbReference>
<dbReference type="GO" id="GO:1902626">
    <property type="term" value="P:assembly of large subunit precursor of preribosome"/>
    <property type="evidence" value="ECO:0007669"/>
    <property type="project" value="UniProtKB-UniRule"/>
</dbReference>
<dbReference type="CDD" id="cd16331">
    <property type="entry name" value="YjgA-like"/>
    <property type="match status" value="1"/>
</dbReference>
<dbReference type="FunFam" id="1.10.60.30:FF:000001">
    <property type="entry name" value="UPF0307 protein YjgA"/>
    <property type="match status" value="1"/>
</dbReference>
<dbReference type="FunFam" id="1.10.60.30:FF:000002">
    <property type="entry name" value="UPF0307 protein YjgA"/>
    <property type="match status" value="1"/>
</dbReference>
<dbReference type="Gene3D" id="1.10.60.30">
    <property type="entry name" value="PSPTO4464-like domains"/>
    <property type="match status" value="2"/>
</dbReference>
<dbReference type="HAMAP" id="MF_00765">
    <property type="entry name" value="DarP"/>
    <property type="match status" value="1"/>
</dbReference>
<dbReference type="InterPro" id="IPR006839">
    <property type="entry name" value="DarP"/>
</dbReference>
<dbReference type="InterPro" id="IPR023153">
    <property type="entry name" value="DarP_sf"/>
</dbReference>
<dbReference type="NCBIfam" id="NF003593">
    <property type="entry name" value="PRK05255.1-1"/>
    <property type="match status" value="1"/>
</dbReference>
<dbReference type="PANTHER" id="PTHR38101">
    <property type="entry name" value="UPF0307 PROTEIN YJGA"/>
    <property type="match status" value="1"/>
</dbReference>
<dbReference type="PANTHER" id="PTHR38101:SF1">
    <property type="entry name" value="UPF0307 PROTEIN YJGA"/>
    <property type="match status" value="1"/>
</dbReference>
<dbReference type="Pfam" id="PF04751">
    <property type="entry name" value="DarP"/>
    <property type="match status" value="1"/>
</dbReference>
<dbReference type="PIRSF" id="PIRSF016183">
    <property type="entry name" value="UCP016183"/>
    <property type="match status" value="1"/>
</dbReference>
<dbReference type="SUPFAM" id="SSF158710">
    <property type="entry name" value="PSPTO4464-like"/>
    <property type="match status" value="1"/>
</dbReference>
<name>DARP_SALAR</name>
<accession>A9MEY0</accession>
<feature type="chain" id="PRO_1000083536" description="Dual-action ribosomal maturation protein DarP">
    <location>
        <begin position="1"/>
        <end position="183"/>
    </location>
</feature>
<protein>
    <recommendedName>
        <fullName evidence="1">Dual-action ribosomal maturation protein DarP</fullName>
    </recommendedName>
    <alternativeName>
        <fullName evidence="1">Large ribosomal subunit assembly factor DarP</fullName>
    </alternativeName>
</protein>